<protein>
    <recommendedName>
        <fullName evidence="1">5'-methylthioadenosine/S-adenosylhomocysteine nucleosidase</fullName>
        <shortName evidence="1">MTA/SAH nucleosidase</shortName>
        <shortName evidence="1">MTAN</shortName>
        <ecNumber evidence="1">3.2.2.9</ecNumber>
    </recommendedName>
    <alternativeName>
        <fullName evidence="1">5'-deoxyadenosine nucleosidase</fullName>
        <shortName evidence="1">DOA nucleosidase</shortName>
        <shortName evidence="1">dAdo nucleosidase</shortName>
    </alternativeName>
    <alternativeName>
        <fullName evidence="1">5'-methylthioadenosine nucleosidase</fullName>
        <shortName evidence="1">MTA nucleosidase</shortName>
    </alternativeName>
    <alternativeName>
        <fullName evidence="1">S-adenosylhomocysteine nucleosidase</fullName>
        <shortName evidence="1">AdoHcy nucleosidase</shortName>
        <shortName evidence="1">SAH nucleosidase</shortName>
        <shortName evidence="1">SRH nucleosidase</shortName>
    </alternativeName>
</protein>
<gene>
    <name evidence="1" type="primary">mtnN</name>
    <name type="ordered locus">VP0479</name>
</gene>
<organism>
    <name type="scientific">Vibrio parahaemolyticus serotype O3:K6 (strain RIMD 2210633)</name>
    <dbReference type="NCBI Taxonomy" id="223926"/>
    <lineage>
        <taxon>Bacteria</taxon>
        <taxon>Pseudomonadati</taxon>
        <taxon>Pseudomonadota</taxon>
        <taxon>Gammaproteobacteria</taxon>
        <taxon>Vibrionales</taxon>
        <taxon>Vibrionaceae</taxon>
        <taxon>Vibrio</taxon>
    </lineage>
</organism>
<sequence length="231" mass="24748">MKVGIIGAMEQEVTILKEAMTNCQTVNKAGCTFFSGQINDVDVVLLQSGIGKVAAAVGTTILLDEYQPDVVINTGSAGGFDSSLNLGDVVISTEVRHHDADVTAFGYEIGQMAGQPAAFKADEKLMDLAEKALEQMANTHAVRGLICTGDAFVCTAERQAFIRENFPSVIAVEMEASAIAQTCHQFNTPFVVVRAISDVADKESPMSFEEFLPLAAKSSSEMVFKMLELVK</sequence>
<feature type="chain" id="PRO_0000359387" description="5'-methylthioadenosine/S-adenosylhomocysteine nucleosidase">
    <location>
        <begin position="1"/>
        <end position="231"/>
    </location>
</feature>
<feature type="active site" description="Proton acceptor" evidence="1">
    <location>
        <position position="12"/>
    </location>
</feature>
<feature type="active site" description="Proton donor" evidence="1">
    <location>
        <position position="198"/>
    </location>
</feature>
<feature type="binding site" evidence="1">
    <location>
        <position position="78"/>
    </location>
    <ligand>
        <name>substrate</name>
    </ligand>
</feature>
<feature type="binding site" evidence="1">
    <location>
        <position position="153"/>
    </location>
    <ligand>
        <name>substrate</name>
    </ligand>
</feature>
<feature type="binding site" evidence="1">
    <location>
        <begin position="174"/>
        <end position="175"/>
    </location>
    <ligand>
        <name>substrate</name>
    </ligand>
</feature>
<evidence type="ECO:0000255" key="1">
    <source>
        <dbReference type="HAMAP-Rule" id="MF_01684"/>
    </source>
</evidence>
<proteinExistence type="inferred from homology"/>
<accession>Q87SE5</accession>
<name>MTNN_VIBPA</name>
<comment type="function">
    <text evidence="1">Catalyzes the irreversible cleavage of the glycosidic bond in both 5'-methylthioadenosine (MTA) and S-adenosylhomocysteine (SAH/AdoHcy) to adenine and the corresponding thioribose, 5'-methylthioribose and S-ribosylhomocysteine, respectively. Also cleaves 5'-deoxyadenosine, a toxic by-product of radical S-adenosylmethionine (SAM) enzymes, into 5-deoxyribose and adenine.</text>
</comment>
<comment type="catalytic activity">
    <reaction evidence="1">
        <text>S-adenosyl-L-homocysteine + H2O = S-(5-deoxy-D-ribos-5-yl)-L-homocysteine + adenine</text>
        <dbReference type="Rhea" id="RHEA:17805"/>
        <dbReference type="ChEBI" id="CHEBI:15377"/>
        <dbReference type="ChEBI" id="CHEBI:16708"/>
        <dbReference type="ChEBI" id="CHEBI:57856"/>
        <dbReference type="ChEBI" id="CHEBI:58195"/>
        <dbReference type="EC" id="3.2.2.9"/>
    </reaction>
</comment>
<comment type="catalytic activity">
    <reaction evidence="1">
        <text>S-methyl-5'-thioadenosine + H2O = 5-(methylsulfanyl)-D-ribose + adenine</text>
        <dbReference type="Rhea" id="RHEA:13617"/>
        <dbReference type="ChEBI" id="CHEBI:15377"/>
        <dbReference type="ChEBI" id="CHEBI:16708"/>
        <dbReference type="ChEBI" id="CHEBI:17509"/>
        <dbReference type="ChEBI" id="CHEBI:78440"/>
        <dbReference type="EC" id="3.2.2.9"/>
    </reaction>
</comment>
<comment type="catalytic activity">
    <reaction evidence="1">
        <text>5'-deoxyadenosine + H2O = 5-deoxy-D-ribose + adenine</text>
        <dbReference type="Rhea" id="RHEA:29859"/>
        <dbReference type="ChEBI" id="CHEBI:15377"/>
        <dbReference type="ChEBI" id="CHEBI:16708"/>
        <dbReference type="ChEBI" id="CHEBI:17319"/>
        <dbReference type="ChEBI" id="CHEBI:149540"/>
        <dbReference type="EC" id="3.2.2.9"/>
    </reaction>
    <physiologicalReaction direction="left-to-right" evidence="1">
        <dbReference type="Rhea" id="RHEA:29860"/>
    </physiologicalReaction>
</comment>
<comment type="pathway">
    <text evidence="1">Amino-acid biosynthesis; L-methionine biosynthesis via salvage pathway; S-methyl-5-thio-alpha-D-ribose 1-phosphate from S-methyl-5'-thioadenosine (hydrolase route): step 1/2.</text>
</comment>
<comment type="similarity">
    <text evidence="1">Belongs to the PNP/UDP phosphorylase family. MtnN subfamily.</text>
</comment>
<dbReference type="EC" id="3.2.2.9" evidence="1"/>
<dbReference type="EMBL" id="BA000031">
    <property type="protein sequence ID" value="BAC58742.1"/>
    <property type="molecule type" value="Genomic_DNA"/>
</dbReference>
<dbReference type="RefSeq" id="NP_796858.1">
    <property type="nucleotide sequence ID" value="NC_004603.1"/>
</dbReference>
<dbReference type="RefSeq" id="WP_005461186.1">
    <property type="nucleotide sequence ID" value="NC_004603.1"/>
</dbReference>
<dbReference type="SMR" id="Q87SE5"/>
<dbReference type="GeneID" id="1187947"/>
<dbReference type="KEGG" id="vpa:VP0479"/>
<dbReference type="PATRIC" id="fig|223926.6.peg.456"/>
<dbReference type="eggNOG" id="COG0775">
    <property type="taxonomic scope" value="Bacteria"/>
</dbReference>
<dbReference type="HOGENOM" id="CLU_031248_2_2_6"/>
<dbReference type="UniPathway" id="UPA00904">
    <property type="reaction ID" value="UER00871"/>
</dbReference>
<dbReference type="Proteomes" id="UP000002493">
    <property type="component" value="Chromosome 1"/>
</dbReference>
<dbReference type="GO" id="GO:0005829">
    <property type="term" value="C:cytosol"/>
    <property type="evidence" value="ECO:0007669"/>
    <property type="project" value="TreeGrafter"/>
</dbReference>
<dbReference type="GO" id="GO:0008782">
    <property type="term" value="F:adenosylhomocysteine nucleosidase activity"/>
    <property type="evidence" value="ECO:0007669"/>
    <property type="project" value="UniProtKB-UniRule"/>
</dbReference>
<dbReference type="GO" id="GO:0008930">
    <property type="term" value="F:methylthioadenosine nucleosidase activity"/>
    <property type="evidence" value="ECO:0007669"/>
    <property type="project" value="UniProtKB-UniRule"/>
</dbReference>
<dbReference type="GO" id="GO:0019509">
    <property type="term" value="P:L-methionine salvage from methylthioadenosine"/>
    <property type="evidence" value="ECO:0007669"/>
    <property type="project" value="UniProtKB-UniRule"/>
</dbReference>
<dbReference type="GO" id="GO:0019284">
    <property type="term" value="P:L-methionine salvage from S-adenosylmethionine"/>
    <property type="evidence" value="ECO:0007669"/>
    <property type="project" value="TreeGrafter"/>
</dbReference>
<dbReference type="GO" id="GO:0009164">
    <property type="term" value="P:nucleoside catabolic process"/>
    <property type="evidence" value="ECO:0007669"/>
    <property type="project" value="InterPro"/>
</dbReference>
<dbReference type="CDD" id="cd09008">
    <property type="entry name" value="MTAN"/>
    <property type="match status" value="1"/>
</dbReference>
<dbReference type="FunFam" id="3.40.50.1580:FF:000001">
    <property type="entry name" value="MTA/SAH nucleosidase family protein"/>
    <property type="match status" value="1"/>
</dbReference>
<dbReference type="Gene3D" id="3.40.50.1580">
    <property type="entry name" value="Nucleoside phosphorylase domain"/>
    <property type="match status" value="1"/>
</dbReference>
<dbReference type="HAMAP" id="MF_01684">
    <property type="entry name" value="Salvage_MtnN"/>
    <property type="match status" value="1"/>
</dbReference>
<dbReference type="InterPro" id="IPR010049">
    <property type="entry name" value="MTA_SAH_Nsdase"/>
</dbReference>
<dbReference type="InterPro" id="IPR000845">
    <property type="entry name" value="Nucleoside_phosphorylase_d"/>
</dbReference>
<dbReference type="InterPro" id="IPR035994">
    <property type="entry name" value="Nucleoside_phosphorylase_sf"/>
</dbReference>
<dbReference type="NCBIfam" id="TIGR01704">
    <property type="entry name" value="MTA_SAH-Nsdase"/>
    <property type="match status" value="1"/>
</dbReference>
<dbReference type="NCBIfam" id="NF004079">
    <property type="entry name" value="PRK05584.1"/>
    <property type="match status" value="1"/>
</dbReference>
<dbReference type="PANTHER" id="PTHR46832">
    <property type="entry name" value="5'-METHYLTHIOADENOSINE/S-ADENOSYLHOMOCYSTEINE NUCLEOSIDASE"/>
    <property type="match status" value="1"/>
</dbReference>
<dbReference type="PANTHER" id="PTHR46832:SF1">
    <property type="entry name" value="5'-METHYLTHIOADENOSINE_S-ADENOSYLHOMOCYSTEINE NUCLEOSIDASE"/>
    <property type="match status" value="1"/>
</dbReference>
<dbReference type="Pfam" id="PF01048">
    <property type="entry name" value="PNP_UDP_1"/>
    <property type="match status" value="1"/>
</dbReference>
<dbReference type="SUPFAM" id="SSF53167">
    <property type="entry name" value="Purine and uridine phosphorylases"/>
    <property type="match status" value="1"/>
</dbReference>
<reference key="1">
    <citation type="journal article" date="2003" name="Lancet">
        <title>Genome sequence of Vibrio parahaemolyticus: a pathogenic mechanism distinct from that of V. cholerae.</title>
        <authorList>
            <person name="Makino K."/>
            <person name="Oshima K."/>
            <person name="Kurokawa K."/>
            <person name="Yokoyama K."/>
            <person name="Uda T."/>
            <person name="Tagomori K."/>
            <person name="Iijima Y."/>
            <person name="Najima M."/>
            <person name="Nakano M."/>
            <person name="Yamashita A."/>
            <person name="Kubota Y."/>
            <person name="Kimura S."/>
            <person name="Yasunaga T."/>
            <person name="Honda T."/>
            <person name="Shinagawa H."/>
            <person name="Hattori M."/>
            <person name="Iida T."/>
        </authorList>
    </citation>
    <scope>NUCLEOTIDE SEQUENCE [LARGE SCALE GENOMIC DNA]</scope>
    <source>
        <strain>RIMD 2210633</strain>
    </source>
</reference>
<keyword id="KW-0028">Amino-acid biosynthesis</keyword>
<keyword id="KW-0378">Hydrolase</keyword>
<keyword id="KW-0486">Methionine biosynthesis</keyword>